<protein>
    <recommendedName>
        <fullName evidence="1">Chaperone modulatory protein CbpM</fullName>
    </recommendedName>
</protein>
<name>CBPM_ECOLI</name>
<evidence type="ECO:0000255" key="1">
    <source>
        <dbReference type="HAMAP-Rule" id="MF_01155"/>
    </source>
</evidence>
<sequence>MANVTVTFTITEFCLHTGISEEELNEIVGLGVVEPREIQETTWVFDDHAAIVVQRAVRLRHELALDWPGIAVALTLMDDIAHLKQENRLLRQRLSRFVAHP</sequence>
<comment type="function">
    <text>Interacts with CbpA and inhibits both the DnaJ-like co-chaperone activity and the DNA binding activity of CbpA. Together with CbpA, modulates the activity of the DnaK chaperone system. Does not inhibit the co-chaperone activity of DnaJ.</text>
</comment>
<comment type="induction">
    <text>In late stationary phase.</text>
</comment>
<comment type="similarity">
    <text evidence="1">Belongs to the CbpM family.</text>
</comment>
<reference key="1">
    <citation type="journal article" date="1994" name="Proc. Natl. Acad. Sci. U.S.A.">
        <title>An analogue of the DnaJ molecular chaperone in Escherichia coli.</title>
        <authorList>
            <person name="Ueguchi C."/>
            <person name="Kakeda M."/>
            <person name="Yamada H."/>
            <person name="Mizuno T."/>
        </authorList>
    </citation>
    <scope>NUCLEOTIDE SEQUENCE [GENOMIC DNA]</scope>
    <source>
        <strain>K12</strain>
    </source>
</reference>
<reference key="2">
    <citation type="journal article" date="1996" name="DNA Res.">
        <title>A 718-kb DNA sequence of the Escherichia coli K-12 genome corresponding to the 12.7-28.0 min region on the linkage map.</title>
        <authorList>
            <person name="Oshima T."/>
            <person name="Aiba H."/>
            <person name="Baba T."/>
            <person name="Fujita K."/>
            <person name="Hayashi K."/>
            <person name="Honjo A."/>
            <person name="Ikemoto K."/>
            <person name="Inada T."/>
            <person name="Itoh T."/>
            <person name="Kajihara M."/>
            <person name="Kanai K."/>
            <person name="Kashimoto K."/>
            <person name="Kimura S."/>
            <person name="Kitagawa M."/>
            <person name="Makino K."/>
            <person name="Masuda S."/>
            <person name="Miki T."/>
            <person name="Mizobuchi K."/>
            <person name="Mori H."/>
            <person name="Motomura K."/>
            <person name="Nakamura Y."/>
            <person name="Nashimoto H."/>
            <person name="Nishio Y."/>
            <person name="Saito N."/>
            <person name="Sampei G."/>
            <person name="Seki Y."/>
            <person name="Tagami H."/>
            <person name="Takemoto K."/>
            <person name="Wada C."/>
            <person name="Yamamoto Y."/>
            <person name="Yano M."/>
            <person name="Horiuchi T."/>
        </authorList>
    </citation>
    <scope>NUCLEOTIDE SEQUENCE [LARGE SCALE GENOMIC DNA]</scope>
    <source>
        <strain>K12 / W3110 / ATCC 27325 / DSM 5911</strain>
    </source>
</reference>
<reference key="3">
    <citation type="journal article" date="1997" name="Science">
        <title>The complete genome sequence of Escherichia coli K-12.</title>
        <authorList>
            <person name="Blattner F.R."/>
            <person name="Plunkett G. III"/>
            <person name="Bloch C.A."/>
            <person name="Perna N.T."/>
            <person name="Burland V."/>
            <person name="Riley M."/>
            <person name="Collado-Vides J."/>
            <person name="Glasner J.D."/>
            <person name="Rode C.K."/>
            <person name="Mayhew G.F."/>
            <person name="Gregor J."/>
            <person name="Davis N.W."/>
            <person name="Kirkpatrick H.A."/>
            <person name="Goeden M.A."/>
            <person name="Rose D.J."/>
            <person name="Mau B."/>
            <person name="Shao Y."/>
        </authorList>
    </citation>
    <scope>NUCLEOTIDE SEQUENCE [LARGE SCALE GENOMIC DNA]</scope>
    <source>
        <strain>K12 / MG1655 / ATCC 47076</strain>
    </source>
</reference>
<reference key="4">
    <citation type="journal article" date="2006" name="Mol. Syst. Biol.">
        <title>Highly accurate genome sequences of Escherichia coli K-12 strains MG1655 and W3110.</title>
        <authorList>
            <person name="Hayashi K."/>
            <person name="Morooka N."/>
            <person name="Yamamoto Y."/>
            <person name="Fujita K."/>
            <person name="Isono K."/>
            <person name="Choi S."/>
            <person name="Ohtsubo E."/>
            <person name="Baba T."/>
            <person name="Wanner B.L."/>
            <person name="Mori H."/>
            <person name="Horiuchi T."/>
        </authorList>
    </citation>
    <scope>NUCLEOTIDE SEQUENCE [LARGE SCALE GENOMIC DNA]</scope>
    <source>
        <strain>K12 / W3110 / ATCC 27325 / DSM 5911</strain>
    </source>
</reference>
<reference key="5">
    <citation type="journal article" date="2004" name="J. Biol. Chem.">
        <title>CbpA, a DnaJ homolog, is a DnaK co-chaperone, and its activity is modulated by CbpM.</title>
        <authorList>
            <person name="Chae C."/>
            <person name="Sharma S."/>
            <person name="Hoskins J.R."/>
            <person name="Wickner S."/>
        </authorList>
    </citation>
    <scope>CHARACTERIZATION</scope>
    <source>
        <strain>K12 / DH5-alpha</strain>
    </source>
</reference>
<reference key="6">
    <citation type="journal article" date="2007" name="J. Bacteriol.">
        <title>In vivo modulation of a DnaJ homolog, CbpA, by CbpM.</title>
        <authorList>
            <person name="Chenoweth M.R."/>
            <person name="Trun N."/>
            <person name="Wickner S."/>
        </authorList>
    </citation>
    <scope>INHIBITION OF CBPA ACTIVITY</scope>
</reference>
<proteinExistence type="evidence at protein level"/>
<keyword id="KW-1185">Reference proteome</keyword>
<dbReference type="EMBL" id="D16500">
    <property type="status" value="NOT_ANNOTATED_CDS"/>
    <property type="molecule type" value="Genomic_DNA"/>
</dbReference>
<dbReference type="EMBL" id="U00096">
    <property type="protein sequence ID" value="AAC74084.1"/>
    <property type="molecule type" value="Genomic_DNA"/>
</dbReference>
<dbReference type="EMBL" id="AP009048">
    <property type="protein sequence ID" value="BAA36141.1"/>
    <property type="molecule type" value="Genomic_DNA"/>
</dbReference>
<dbReference type="PIR" id="E64841">
    <property type="entry name" value="E64841"/>
</dbReference>
<dbReference type="RefSeq" id="NP_415519.1">
    <property type="nucleotide sequence ID" value="NC_000913.3"/>
</dbReference>
<dbReference type="RefSeq" id="WP_000024560.1">
    <property type="nucleotide sequence ID" value="NZ_STEB01000006.1"/>
</dbReference>
<dbReference type="SMR" id="P63264"/>
<dbReference type="BioGRID" id="4262841">
    <property type="interactions" value="8"/>
</dbReference>
<dbReference type="DIP" id="DIP-47830N"/>
<dbReference type="FunCoup" id="P63264">
    <property type="interactions" value="54"/>
</dbReference>
<dbReference type="IntAct" id="P63264">
    <property type="interactions" value="1"/>
</dbReference>
<dbReference type="STRING" id="511145.b0999"/>
<dbReference type="jPOST" id="P63264"/>
<dbReference type="PaxDb" id="511145-b0999"/>
<dbReference type="EnsemblBacteria" id="AAC74084">
    <property type="protein sequence ID" value="AAC74084"/>
    <property type="gene ID" value="b0999"/>
</dbReference>
<dbReference type="GeneID" id="93776412"/>
<dbReference type="GeneID" id="945597"/>
<dbReference type="KEGG" id="ecj:JW0984"/>
<dbReference type="KEGG" id="eco:b0999"/>
<dbReference type="KEGG" id="ecoc:C3026_06085"/>
<dbReference type="PATRIC" id="fig|1411691.4.peg.1272"/>
<dbReference type="EchoBASE" id="EB2111"/>
<dbReference type="eggNOG" id="COG0789">
    <property type="taxonomic scope" value="Bacteria"/>
</dbReference>
<dbReference type="HOGENOM" id="CLU_144710_3_1_6"/>
<dbReference type="InParanoid" id="P63264"/>
<dbReference type="OMA" id="DWPGIAM"/>
<dbReference type="OrthoDB" id="5567704at2"/>
<dbReference type="PhylomeDB" id="P63264"/>
<dbReference type="BioCyc" id="EcoCyc:EG12194-MONOMER"/>
<dbReference type="PRO" id="PR:P63264"/>
<dbReference type="Proteomes" id="UP000000625">
    <property type="component" value="Chromosome"/>
</dbReference>
<dbReference type="GO" id="GO:0004857">
    <property type="term" value="F:enzyme inhibitor activity"/>
    <property type="evidence" value="ECO:0000314"/>
    <property type="project" value="EcoCyc"/>
</dbReference>
<dbReference type="FunFam" id="1.10.1660.10:FF:000006">
    <property type="entry name" value="Chaperone modulatory protein CbpM"/>
    <property type="match status" value="1"/>
</dbReference>
<dbReference type="Gene3D" id="1.10.1660.10">
    <property type="match status" value="1"/>
</dbReference>
<dbReference type="HAMAP" id="MF_01155">
    <property type="entry name" value="CbpM"/>
    <property type="match status" value="1"/>
</dbReference>
<dbReference type="InterPro" id="IPR022835">
    <property type="entry name" value="CbpM"/>
</dbReference>
<dbReference type="NCBIfam" id="NF007617">
    <property type="entry name" value="PRK10265.1"/>
    <property type="match status" value="1"/>
</dbReference>
<dbReference type="Pfam" id="PF13591">
    <property type="entry name" value="MerR_2"/>
    <property type="match status" value="1"/>
</dbReference>
<feature type="chain" id="PRO_0000211627" description="Chaperone modulatory protein CbpM">
    <location>
        <begin position="1"/>
        <end position="101"/>
    </location>
</feature>
<accession>P63264</accession>
<accession>P36660</accession>
<organism>
    <name type="scientific">Escherichia coli (strain K12)</name>
    <dbReference type="NCBI Taxonomy" id="83333"/>
    <lineage>
        <taxon>Bacteria</taxon>
        <taxon>Pseudomonadati</taxon>
        <taxon>Pseudomonadota</taxon>
        <taxon>Gammaproteobacteria</taxon>
        <taxon>Enterobacterales</taxon>
        <taxon>Enterobacteriaceae</taxon>
        <taxon>Escherichia</taxon>
    </lineage>
</organism>
<gene>
    <name evidence="1" type="primary">cbpM</name>
    <name type="synonym">yccD</name>
    <name type="ordered locus">b0999</name>
    <name type="ordered locus">JW0984</name>
</gene>